<comment type="function">
    <text evidence="1">Catalyzes the cleavage of 5-oxoproline to form L-glutamate coupled to the hydrolysis of ATP to ADP and inorganic phosphate.</text>
</comment>
<comment type="catalytic activity">
    <reaction evidence="1">
        <text>5-oxo-L-proline + ATP + 2 H2O = L-glutamate + ADP + phosphate + H(+)</text>
        <dbReference type="Rhea" id="RHEA:10348"/>
        <dbReference type="ChEBI" id="CHEBI:15377"/>
        <dbReference type="ChEBI" id="CHEBI:15378"/>
        <dbReference type="ChEBI" id="CHEBI:29985"/>
        <dbReference type="ChEBI" id="CHEBI:30616"/>
        <dbReference type="ChEBI" id="CHEBI:43474"/>
        <dbReference type="ChEBI" id="CHEBI:58402"/>
        <dbReference type="ChEBI" id="CHEBI:456216"/>
        <dbReference type="EC" id="3.5.2.9"/>
    </reaction>
</comment>
<comment type="subunit">
    <text evidence="1">Forms a complex composed of PxpA, PxpB and PxpC.</text>
</comment>
<comment type="similarity">
    <text evidence="1">Belongs to the LamB/PxpA family.</text>
</comment>
<gene>
    <name evidence="1" type="primary">pxpA</name>
    <name type="ordered locus">TT_P0137</name>
</gene>
<proteinExistence type="inferred from homology"/>
<dbReference type="EC" id="3.5.2.9" evidence="1"/>
<dbReference type="EMBL" id="AE017222">
    <property type="protein sequence ID" value="AAS82467.1"/>
    <property type="molecule type" value="Genomic_DNA"/>
</dbReference>
<dbReference type="RefSeq" id="WP_011174427.1">
    <property type="nucleotide sequence ID" value="NC_005838.1"/>
</dbReference>
<dbReference type="SMR" id="Q746B8"/>
<dbReference type="KEGG" id="tth:TT_P0137"/>
<dbReference type="eggNOG" id="COG1540">
    <property type="taxonomic scope" value="Bacteria"/>
</dbReference>
<dbReference type="HOGENOM" id="CLU_069535_0_0_0"/>
<dbReference type="OrthoDB" id="9773478at2"/>
<dbReference type="Proteomes" id="UP000000592">
    <property type="component" value="Plasmid pTT27"/>
</dbReference>
<dbReference type="GO" id="GO:0017168">
    <property type="term" value="F:5-oxoprolinase (ATP-hydrolyzing) activity"/>
    <property type="evidence" value="ECO:0007669"/>
    <property type="project" value="UniProtKB-UniRule"/>
</dbReference>
<dbReference type="GO" id="GO:0005524">
    <property type="term" value="F:ATP binding"/>
    <property type="evidence" value="ECO:0007669"/>
    <property type="project" value="UniProtKB-UniRule"/>
</dbReference>
<dbReference type="GO" id="GO:0005975">
    <property type="term" value="P:carbohydrate metabolic process"/>
    <property type="evidence" value="ECO:0007669"/>
    <property type="project" value="InterPro"/>
</dbReference>
<dbReference type="CDD" id="cd10787">
    <property type="entry name" value="LamB_YcsF_like"/>
    <property type="match status" value="1"/>
</dbReference>
<dbReference type="Gene3D" id="3.20.20.370">
    <property type="entry name" value="Glycoside hydrolase/deacetylase"/>
    <property type="match status" value="1"/>
</dbReference>
<dbReference type="HAMAP" id="MF_00691">
    <property type="entry name" value="PxpA"/>
    <property type="match status" value="1"/>
</dbReference>
<dbReference type="InterPro" id="IPR011330">
    <property type="entry name" value="Glyco_hydro/deAcase_b/a-brl"/>
</dbReference>
<dbReference type="InterPro" id="IPR005501">
    <property type="entry name" value="LamB/YcsF/PxpA-like"/>
</dbReference>
<dbReference type="NCBIfam" id="NF003814">
    <property type="entry name" value="PRK05406.1-3"/>
    <property type="match status" value="1"/>
</dbReference>
<dbReference type="NCBIfam" id="NF003816">
    <property type="entry name" value="PRK05406.1-5"/>
    <property type="match status" value="1"/>
</dbReference>
<dbReference type="PANTHER" id="PTHR30292:SF0">
    <property type="entry name" value="5-OXOPROLINASE SUBUNIT A"/>
    <property type="match status" value="1"/>
</dbReference>
<dbReference type="PANTHER" id="PTHR30292">
    <property type="entry name" value="UNCHARACTERIZED PROTEIN YBGL-RELATED"/>
    <property type="match status" value="1"/>
</dbReference>
<dbReference type="Pfam" id="PF03746">
    <property type="entry name" value="LamB_YcsF"/>
    <property type="match status" value="1"/>
</dbReference>
<dbReference type="SUPFAM" id="SSF88713">
    <property type="entry name" value="Glycoside hydrolase/deacetylase"/>
    <property type="match status" value="1"/>
</dbReference>
<geneLocation type="plasmid">
    <name>pTT27</name>
</geneLocation>
<keyword id="KW-0067">ATP-binding</keyword>
<keyword id="KW-0378">Hydrolase</keyword>
<keyword id="KW-0547">Nucleotide-binding</keyword>
<keyword id="KW-0614">Plasmid</keyword>
<reference key="1">
    <citation type="journal article" date="2004" name="Nat. Biotechnol.">
        <title>The genome sequence of the extreme thermophile Thermus thermophilus.</title>
        <authorList>
            <person name="Henne A."/>
            <person name="Brueggemann H."/>
            <person name="Raasch C."/>
            <person name="Wiezer A."/>
            <person name="Hartsch T."/>
            <person name="Liesegang H."/>
            <person name="Johann A."/>
            <person name="Lienard T."/>
            <person name="Gohl O."/>
            <person name="Martinez-Arias R."/>
            <person name="Jacobi C."/>
            <person name="Starkuviene V."/>
            <person name="Schlenczeck S."/>
            <person name="Dencker S."/>
            <person name="Huber R."/>
            <person name="Klenk H.-P."/>
            <person name="Kramer W."/>
            <person name="Merkl R."/>
            <person name="Gottschalk G."/>
            <person name="Fritz H.-J."/>
        </authorList>
    </citation>
    <scope>NUCLEOTIDE SEQUENCE [LARGE SCALE GENOMIC DNA]</scope>
    <source>
        <strain>ATCC BAA-163 / DSM 7039 / HB27</strain>
    </source>
</reference>
<organism>
    <name type="scientific">Thermus thermophilus (strain ATCC BAA-163 / DSM 7039 / HB27)</name>
    <dbReference type="NCBI Taxonomy" id="262724"/>
    <lineage>
        <taxon>Bacteria</taxon>
        <taxon>Thermotogati</taxon>
        <taxon>Deinococcota</taxon>
        <taxon>Deinococci</taxon>
        <taxon>Thermales</taxon>
        <taxon>Thermaceae</taxon>
        <taxon>Thermus</taxon>
    </lineage>
</organism>
<protein>
    <recommendedName>
        <fullName evidence="1">5-oxoprolinase subunit A</fullName>
        <shortName evidence="1">5-OPase subunit A</shortName>
        <ecNumber evidence="1">3.5.2.9</ecNumber>
    </recommendedName>
    <alternativeName>
        <fullName evidence="1">5-oxoprolinase (ATP-hydrolyzing) subunit A</fullName>
    </alternativeName>
</protein>
<accession>Q746B8</accession>
<name>PXPA_THET2</name>
<sequence>MKVDLNADAGESYGAFAYGHDREIFPLVTSANLACGFHGGSPGRILEAVRLAKAHGVAVGAHPGFPDLVGFGRREMALSPEEVYADVLYQIGALSAFLKAEGLPLHHVKPHGALYLKACRDRETARAIALAVKAFDPGLPLVVLPGTVYEEEARKAGLRVVLEAFPERAYLRNGQLAPRSMPGSWITDPEEAARRALRMVLEGKVEALDGGEVAVRAETLCIHGDNPNAPEVARAVREALEQAGVEVRAF</sequence>
<feature type="chain" id="PRO_0000185055" description="5-oxoprolinase subunit A">
    <location>
        <begin position="1"/>
        <end position="250"/>
    </location>
</feature>
<evidence type="ECO:0000255" key="1">
    <source>
        <dbReference type="HAMAP-Rule" id="MF_00691"/>
    </source>
</evidence>